<proteinExistence type="inferred from homology"/>
<evidence type="ECO:0000255" key="1">
    <source>
        <dbReference type="HAMAP-Rule" id="MF_01363"/>
    </source>
</evidence>
<evidence type="ECO:0000305" key="2"/>
<keyword id="KW-0687">Ribonucleoprotein</keyword>
<keyword id="KW-0689">Ribosomal protein</keyword>
<keyword id="KW-0694">RNA-binding</keyword>
<keyword id="KW-0699">rRNA-binding</keyword>
<reference key="1">
    <citation type="journal article" date="1999" name="Nature">
        <title>Genomic sequence comparison of two unrelated isolates of the human gastric pathogen Helicobacter pylori.</title>
        <authorList>
            <person name="Alm R.A."/>
            <person name="Ling L.-S.L."/>
            <person name="Moir D.T."/>
            <person name="King B.L."/>
            <person name="Brown E.D."/>
            <person name="Doig P.C."/>
            <person name="Smith D.R."/>
            <person name="Noonan B."/>
            <person name="Guild B.C."/>
            <person name="deJonge B.L."/>
            <person name="Carmel G."/>
            <person name="Tummino P.J."/>
            <person name="Caruso A."/>
            <person name="Uria-Nickelsen M."/>
            <person name="Mills D.M."/>
            <person name="Ives C."/>
            <person name="Gibson R."/>
            <person name="Merberg D."/>
            <person name="Mills S.D."/>
            <person name="Jiang Q."/>
            <person name="Taylor D.E."/>
            <person name="Vovis G.F."/>
            <person name="Trust T.J."/>
        </authorList>
    </citation>
    <scope>NUCLEOTIDE SEQUENCE [LARGE SCALE GENOMIC DNA]</scope>
    <source>
        <strain>J99 / ATCC 700824</strain>
    </source>
</reference>
<comment type="function">
    <text evidence="1">This protein binds to 23S rRNA in the presence of protein L20.</text>
</comment>
<comment type="subunit">
    <text evidence="1">Part of the 50S ribosomal subunit. Contacts protein L20.</text>
</comment>
<comment type="similarity">
    <text evidence="1">Belongs to the bacterial ribosomal protein bL21 family.</text>
</comment>
<gene>
    <name evidence="1" type="primary">rplU</name>
    <name type="ordered locus">jhp_0281</name>
</gene>
<name>RL21_HELPJ</name>
<accession>Q9ZMD9</accession>
<feature type="chain" id="PRO_0000181004" description="Large ribosomal subunit protein bL21">
    <location>
        <begin position="1"/>
        <end position="104"/>
    </location>
</feature>
<dbReference type="EMBL" id="AE001439">
    <property type="protein sequence ID" value="AAD05862.1"/>
    <property type="molecule type" value="Genomic_DNA"/>
</dbReference>
<dbReference type="PIR" id="D71951">
    <property type="entry name" value="D71951"/>
</dbReference>
<dbReference type="RefSeq" id="WP_000119329.1">
    <property type="nucleotide sequence ID" value="NZ_CP011330.1"/>
</dbReference>
<dbReference type="SMR" id="Q9ZMD9"/>
<dbReference type="KEGG" id="hpj:jhp_0281"/>
<dbReference type="PATRIC" id="fig|85963.30.peg.732"/>
<dbReference type="eggNOG" id="COG0261">
    <property type="taxonomic scope" value="Bacteria"/>
</dbReference>
<dbReference type="Proteomes" id="UP000000804">
    <property type="component" value="Chromosome"/>
</dbReference>
<dbReference type="GO" id="GO:0005737">
    <property type="term" value="C:cytoplasm"/>
    <property type="evidence" value="ECO:0007669"/>
    <property type="project" value="UniProtKB-ARBA"/>
</dbReference>
<dbReference type="GO" id="GO:1990904">
    <property type="term" value="C:ribonucleoprotein complex"/>
    <property type="evidence" value="ECO:0007669"/>
    <property type="project" value="UniProtKB-KW"/>
</dbReference>
<dbReference type="GO" id="GO:0005840">
    <property type="term" value="C:ribosome"/>
    <property type="evidence" value="ECO:0007669"/>
    <property type="project" value="UniProtKB-KW"/>
</dbReference>
<dbReference type="GO" id="GO:0019843">
    <property type="term" value="F:rRNA binding"/>
    <property type="evidence" value="ECO:0007669"/>
    <property type="project" value="UniProtKB-UniRule"/>
</dbReference>
<dbReference type="GO" id="GO:0003735">
    <property type="term" value="F:structural constituent of ribosome"/>
    <property type="evidence" value="ECO:0007669"/>
    <property type="project" value="InterPro"/>
</dbReference>
<dbReference type="GO" id="GO:0006412">
    <property type="term" value="P:translation"/>
    <property type="evidence" value="ECO:0007669"/>
    <property type="project" value="UniProtKB-UniRule"/>
</dbReference>
<dbReference type="HAMAP" id="MF_01363">
    <property type="entry name" value="Ribosomal_bL21"/>
    <property type="match status" value="1"/>
</dbReference>
<dbReference type="InterPro" id="IPR028909">
    <property type="entry name" value="bL21-like"/>
</dbReference>
<dbReference type="InterPro" id="IPR036164">
    <property type="entry name" value="bL21-like_sf"/>
</dbReference>
<dbReference type="InterPro" id="IPR001787">
    <property type="entry name" value="Ribosomal_bL21"/>
</dbReference>
<dbReference type="InterPro" id="IPR018258">
    <property type="entry name" value="Ribosomal_bL21_CS"/>
</dbReference>
<dbReference type="NCBIfam" id="TIGR00061">
    <property type="entry name" value="L21"/>
    <property type="match status" value="1"/>
</dbReference>
<dbReference type="PANTHER" id="PTHR21349">
    <property type="entry name" value="50S RIBOSOMAL PROTEIN L21"/>
    <property type="match status" value="1"/>
</dbReference>
<dbReference type="PANTHER" id="PTHR21349:SF0">
    <property type="entry name" value="LARGE RIBOSOMAL SUBUNIT PROTEIN BL21M"/>
    <property type="match status" value="1"/>
</dbReference>
<dbReference type="Pfam" id="PF00829">
    <property type="entry name" value="Ribosomal_L21p"/>
    <property type="match status" value="1"/>
</dbReference>
<dbReference type="SUPFAM" id="SSF141091">
    <property type="entry name" value="L21p-like"/>
    <property type="match status" value="1"/>
</dbReference>
<dbReference type="PROSITE" id="PS01169">
    <property type="entry name" value="RIBOSOMAL_L21"/>
    <property type="match status" value="1"/>
</dbReference>
<protein>
    <recommendedName>
        <fullName evidence="1">Large ribosomal subunit protein bL21</fullName>
    </recommendedName>
    <alternativeName>
        <fullName evidence="2">50S ribosomal protein L21</fullName>
    </alternativeName>
</protein>
<sequence length="104" mass="11837">MSYAIFKHGGKQYKVVEGDIVLLDKMNKEPKALVELVEVLAVSKEGKLSCGKPFVNGAKIEAEVINEGRSKKVITFKKRRRKDSKTKRGFRRDFTRVRITKIVA</sequence>
<organism>
    <name type="scientific">Helicobacter pylori (strain J99 / ATCC 700824)</name>
    <name type="common">Campylobacter pylori J99</name>
    <dbReference type="NCBI Taxonomy" id="85963"/>
    <lineage>
        <taxon>Bacteria</taxon>
        <taxon>Pseudomonadati</taxon>
        <taxon>Campylobacterota</taxon>
        <taxon>Epsilonproteobacteria</taxon>
        <taxon>Campylobacterales</taxon>
        <taxon>Helicobacteraceae</taxon>
        <taxon>Helicobacter</taxon>
    </lineage>
</organism>